<gene>
    <name type="primary">YPEL5</name>
    <name type="ORF">QnpA-18437</name>
</gene>
<accession>Q4R4Q6</accession>
<evidence type="ECO:0000250" key="1">
    <source>
        <dbReference type="UniProtKB" id="P62699"/>
    </source>
</evidence>
<evidence type="ECO:0000250" key="2">
    <source>
        <dbReference type="UniProtKB" id="P62700"/>
    </source>
</evidence>
<evidence type="ECO:0000250" key="3">
    <source>
        <dbReference type="UniProtKB" id="Q65Z55"/>
    </source>
</evidence>
<evidence type="ECO:0000255" key="4">
    <source>
        <dbReference type="PROSITE-ProRule" id="PRU01128"/>
    </source>
</evidence>
<evidence type="ECO:0000305" key="5"/>
<keyword id="KW-0963">Cytoplasm</keyword>
<keyword id="KW-0206">Cytoskeleton</keyword>
<keyword id="KW-0479">Metal-binding</keyword>
<keyword id="KW-0539">Nucleus</keyword>
<keyword id="KW-0597">Phosphoprotein</keyword>
<keyword id="KW-1185">Reference proteome</keyword>
<keyword id="KW-0862">Zinc</keyword>
<proteinExistence type="evidence at transcript level"/>
<sequence length="121" mass="13812">MGRIFLDHIGGTRLFSCANCDAILTNRSELISTRFTGATGRAFLFNKVVNLQYSEVQDRVMLTGRHMVRDVSCKNCNSKLGWIYEFATEDSQRYKEGRVILERALVRESEGFEEHVPSDNS</sequence>
<organism>
    <name type="scientific">Macaca fascicularis</name>
    <name type="common">Crab-eating macaque</name>
    <name type="synonym">Cynomolgus monkey</name>
    <dbReference type="NCBI Taxonomy" id="9541"/>
    <lineage>
        <taxon>Eukaryota</taxon>
        <taxon>Metazoa</taxon>
        <taxon>Chordata</taxon>
        <taxon>Craniata</taxon>
        <taxon>Vertebrata</taxon>
        <taxon>Euteleostomi</taxon>
        <taxon>Mammalia</taxon>
        <taxon>Eutheria</taxon>
        <taxon>Euarchontoglires</taxon>
        <taxon>Primates</taxon>
        <taxon>Haplorrhini</taxon>
        <taxon>Catarrhini</taxon>
        <taxon>Cercopithecidae</taxon>
        <taxon>Cercopithecinae</taxon>
        <taxon>Macaca</taxon>
    </lineage>
</organism>
<comment type="function">
    <text evidence="1 3">Component of the CTLH E3 ubiquitin-protein ligase complex that selectively accepts ubiquitin from UBE2H and mediates ubiquitination and subsequent proteasomal degradation of the transcription factor HBP1 (By similarity). Required for normal cell proliferation (By similarity).</text>
</comment>
<comment type="subunit">
    <text evidence="1">Identified in the CTLH complex that contains GID4, RANBP9 and/or RANBP10, MKLN1, MAEA, RMND5A (or alternatively its paralog RMND5B), GID8, ARMC8, WDR26 and YPEL5. Within this complex, MAEA, RMND5A (or alternatively its paralog RMND5B), GID8, WDR26, and RANBP9 and/or RANBP10 form the catalytic core, while GID4, MKLN1, ARMC8 and YPEL5 have ancillary roles. Interacts with RANBP9 and RANBP10.</text>
</comment>
<comment type="subcellular location">
    <subcellularLocation>
        <location evidence="3">Nucleus</location>
    </subcellularLocation>
    <subcellularLocation>
        <location evidence="3">Cytoplasm</location>
        <location evidence="3">Cytoskeleton</location>
        <location evidence="3">Microtubule organizing center</location>
        <location evidence="3">Centrosome</location>
    </subcellularLocation>
    <subcellularLocation>
        <location evidence="3">Cytoplasm</location>
        <location evidence="3">Cytoskeleton</location>
        <location evidence="3">Spindle pole</location>
    </subcellularLocation>
    <subcellularLocation>
        <location evidence="3">Midbody</location>
    </subcellularLocation>
    <text evidence="3">Deteted in nucleus and at the centrosome during interphase. During mitosis, detected on the mitotic spindle, at spindle poles and at the midbody.</text>
</comment>
<comment type="similarity">
    <text evidence="5">Belongs to the yippee family.</text>
</comment>
<protein>
    <recommendedName>
        <fullName>Protein yippee-like 5</fullName>
    </recommendedName>
</protein>
<name>YPEL5_MACFA</name>
<reference key="1">
    <citation type="submission" date="2005-06" db="EMBL/GenBank/DDBJ databases">
        <title>DNA sequences of macaque genes expressed in brain or testis and its evolutionary implications.</title>
        <authorList>
            <consortium name="International consortium for macaque cDNA sequencing and analysis"/>
        </authorList>
    </citation>
    <scope>NUCLEOTIDE SEQUENCE [LARGE SCALE MRNA]</scope>
    <source>
        <tissue>Parietal cortex</tissue>
    </source>
</reference>
<feature type="chain" id="PRO_0000273969" description="Protein yippee-like 5">
    <location>
        <begin position="1"/>
        <end position="121"/>
    </location>
</feature>
<feature type="domain" description="Yippee" evidence="4">
    <location>
        <begin position="13"/>
        <end position="110"/>
    </location>
</feature>
<feature type="binding site" evidence="4">
    <location>
        <position position="17"/>
    </location>
    <ligand>
        <name>Zn(2+)</name>
        <dbReference type="ChEBI" id="CHEBI:29105"/>
    </ligand>
</feature>
<feature type="binding site" evidence="4">
    <location>
        <position position="20"/>
    </location>
    <ligand>
        <name>Zn(2+)</name>
        <dbReference type="ChEBI" id="CHEBI:29105"/>
    </ligand>
</feature>
<feature type="binding site" evidence="4">
    <location>
        <position position="73"/>
    </location>
    <ligand>
        <name>Zn(2+)</name>
        <dbReference type="ChEBI" id="CHEBI:29105"/>
    </ligand>
</feature>
<feature type="binding site" evidence="4">
    <location>
        <position position="76"/>
    </location>
    <ligand>
        <name>Zn(2+)</name>
        <dbReference type="ChEBI" id="CHEBI:29105"/>
    </ligand>
</feature>
<feature type="modified residue" description="Phosphoserine" evidence="2">
    <location>
        <position position="118"/>
    </location>
</feature>
<dbReference type="EMBL" id="AB169838">
    <property type="protein sequence ID" value="BAE01919.1"/>
    <property type="molecule type" value="mRNA"/>
</dbReference>
<dbReference type="SMR" id="Q4R4Q6"/>
<dbReference type="STRING" id="9541.ENSMFAP00000036223"/>
<dbReference type="eggNOG" id="KOG3399">
    <property type="taxonomic scope" value="Eukaryota"/>
</dbReference>
<dbReference type="Proteomes" id="UP000233100">
    <property type="component" value="Unplaced"/>
</dbReference>
<dbReference type="GO" id="GO:0005813">
    <property type="term" value="C:centrosome"/>
    <property type="evidence" value="ECO:0007669"/>
    <property type="project" value="UniProtKB-SubCell"/>
</dbReference>
<dbReference type="GO" id="GO:0005737">
    <property type="term" value="C:cytoplasm"/>
    <property type="evidence" value="ECO:0007669"/>
    <property type="project" value="UniProtKB-KW"/>
</dbReference>
<dbReference type="GO" id="GO:0030496">
    <property type="term" value="C:midbody"/>
    <property type="evidence" value="ECO:0000250"/>
    <property type="project" value="UniProtKB"/>
</dbReference>
<dbReference type="GO" id="GO:0097431">
    <property type="term" value="C:mitotic spindle pole"/>
    <property type="evidence" value="ECO:0000250"/>
    <property type="project" value="UniProtKB"/>
</dbReference>
<dbReference type="GO" id="GO:0005634">
    <property type="term" value="C:nucleus"/>
    <property type="evidence" value="ECO:0000250"/>
    <property type="project" value="UniProtKB"/>
</dbReference>
<dbReference type="GO" id="GO:0046872">
    <property type="term" value="F:metal ion binding"/>
    <property type="evidence" value="ECO:0007669"/>
    <property type="project" value="UniProtKB-KW"/>
</dbReference>
<dbReference type="GO" id="GO:0008283">
    <property type="term" value="P:cell population proliferation"/>
    <property type="evidence" value="ECO:0000250"/>
    <property type="project" value="UniProtKB"/>
</dbReference>
<dbReference type="InterPro" id="IPR034751">
    <property type="entry name" value="Yippee"/>
</dbReference>
<dbReference type="InterPro" id="IPR004910">
    <property type="entry name" value="Yippee/Mis18/Cereblon"/>
</dbReference>
<dbReference type="InterPro" id="IPR039058">
    <property type="entry name" value="Yippee_fam"/>
</dbReference>
<dbReference type="PANTHER" id="PTHR13848">
    <property type="entry name" value="PROTEIN YIPPEE-LIKE CG15309-RELATED"/>
    <property type="match status" value="1"/>
</dbReference>
<dbReference type="Pfam" id="PF03226">
    <property type="entry name" value="Yippee-Mis18"/>
    <property type="match status" value="1"/>
</dbReference>
<dbReference type="PROSITE" id="PS51792">
    <property type="entry name" value="YIPPEE"/>
    <property type="match status" value="1"/>
</dbReference>